<comment type="function">
    <text>May have a structural role to stabilize the lipid body during desiccation of the seed by preventing coalescence of the oil. Probably interacts with both lipid and phospholipid moieties of lipid bodies. May also provide recognition signals for specific lipase anchorage in lipolysis during seedling growth.</text>
</comment>
<comment type="subcellular location">
    <subcellularLocation>
        <location>Lipid droplet</location>
    </subcellularLocation>
    <subcellularLocation>
        <location>Membrane</location>
        <topology>Multi-pass membrane protein</topology>
    </subcellularLocation>
    <text>Surface of oil bodies. Oleosins exist at a monolayer lipid/water interface.</text>
</comment>
<comment type="similarity">
    <text evidence="4">Belongs to the oleosin family.</text>
</comment>
<comment type="sequence caution" evidence="4">
    <conflict type="frameshift">
        <sequence resource="EMBL-CDS" id="AAD10371"/>
    </conflict>
</comment>
<comment type="sequence caution" evidence="4">
    <conflict type="miscellaneous discrepancy">
        <sequence resource="EMBL-CDS" id="AAD10371"/>
    </conflict>
    <text>Sequencing errors.</text>
</comment>
<comment type="sequence caution" evidence="4">
    <conflict type="erroneous gene model prediction">
        <sequence resource="EMBL-CDS" id="CAE02016"/>
    </conflict>
</comment>
<feature type="initiator methionine" description="Removed" evidence="1">
    <location>
        <position position="1"/>
    </location>
</feature>
<feature type="chain" id="PRO_0000108146" description="Oleosin 16 kDa">
    <location>
        <begin position="2"/>
        <end position="148"/>
    </location>
</feature>
<feature type="transmembrane region" description="Helical" evidence="2">
    <location>
        <begin position="43"/>
        <end position="63"/>
    </location>
</feature>
<feature type="transmembrane region" description="Helical" evidence="2">
    <location>
        <begin position="66"/>
        <end position="86"/>
    </location>
</feature>
<feature type="transmembrane region" description="Helical" evidence="2">
    <location>
        <begin position="87"/>
        <end position="107"/>
    </location>
</feature>
<feature type="region of interest" description="Disordered" evidence="3">
    <location>
        <begin position="1"/>
        <end position="21"/>
    </location>
</feature>
<feature type="region of interest" description="Polar">
    <location>
        <begin position="2"/>
        <end position="34"/>
    </location>
</feature>
<feature type="region of interest" description="Hydrophobic">
    <location>
        <begin position="35"/>
        <end position="106"/>
    </location>
</feature>
<feature type="compositionally biased region" description="Gly residues" evidence="3">
    <location>
        <begin position="8"/>
        <end position="17"/>
    </location>
</feature>
<feature type="modified residue" description="N-acetylalanine" evidence="1">
    <location>
        <position position="2"/>
    </location>
</feature>
<feature type="sequence conflict" description="In Ref. 3; AAL40177/AAC33281." evidence="4" ref="3">
    <original>A</original>
    <variation>G</variation>
    <location>
        <position position="2"/>
    </location>
</feature>
<feature type="sequence conflict" description="In Ref. 4; CAE02016 and 5; BAF15387." evidence="4" ref="4 5">
    <original>P</original>
    <variation>R</variation>
    <location>
        <position position="27"/>
    </location>
</feature>
<feature type="sequence conflict" description="In Ref. 3; AAL40177/AAC33281." evidence="4" ref="3">
    <original>M</original>
    <variation>I</variation>
    <location>
        <position position="45"/>
    </location>
</feature>
<feature type="sequence conflict" description="In Ref. 3; AAL40177/AAC33281." evidence="4" ref="3">
    <original>G</original>
    <variation>V</variation>
    <location>
        <position position="92"/>
    </location>
</feature>
<feature type="sequence conflict" description="In Ref. 3; AAL40177/AAC33281." evidence="4" ref="3">
    <original>Q</original>
    <variation>H</variation>
    <location>
        <position position="119"/>
    </location>
</feature>
<feature type="sequence conflict" description="In Ref. 3; AAL40177/AAC33281." evidence="4" ref="3">
    <original>A</original>
    <variation>T</variation>
    <location>
        <position position="123"/>
    </location>
</feature>
<feature type="sequence conflict" description="In Ref. 3; AAL40177/AAC33281." evidence="4" ref="3">
    <original>L</original>
    <variation>V</variation>
    <location>
        <position position="127"/>
    </location>
</feature>
<feature type="sequence conflict" description="In Ref. 3; AAL40177/AAC33281." evidence="4" ref="3">
    <original>A</original>
    <variation>L</variation>
    <location>
        <position position="131"/>
    </location>
</feature>
<feature type="sequence conflict" description="In Ref. 3; AAL40177/AAC33281." evidence="4" ref="3">
    <original>QHR</original>
    <variation>HHL</variation>
    <location>
        <begin position="139"/>
        <end position="141"/>
    </location>
</feature>
<keyword id="KW-0007">Acetylation</keyword>
<keyword id="KW-0551">Lipid droplet</keyword>
<keyword id="KW-0472">Membrane</keyword>
<keyword id="KW-1185">Reference proteome</keyword>
<keyword id="KW-0677">Repeat</keyword>
<keyword id="KW-0812">Transmembrane</keyword>
<keyword id="KW-1133">Transmembrane helix</keyword>
<protein>
    <recommendedName>
        <fullName>Oleosin 16 kDa</fullName>
    </recommendedName>
    <alternativeName>
        <fullName>OSE701</fullName>
    </alternativeName>
</protein>
<gene>
    <name type="primary">OLE16</name>
    <name type="synonym">1CP</name>
    <name type="synonym">OSE375</name>
    <name type="ordered locus">Os04g0546500</name>
    <name type="ordered locus">LOC_Os04g46200</name>
    <name evidence="5" type="ORF">OsJ_15670</name>
    <name type="ORF">OSJNBa0079A21.14</name>
</gene>
<reference key="1">
    <citation type="online journal article" date="1995" name="Plant Gene Register">
        <title>Two embryo-specific cDNAs encoding two oleosin isoforms on the surface of oil bodies from rice.</title>
        <authorList>
            <person name="Chen P.-W."/>
            <person name="Chai Y.-J."/>
            <person name="Wang L.-D."/>
            <person name="Tzen J.T.C."/>
            <person name="Tseng M.-J."/>
            <person name="Chen L.-J."/>
        </authorList>
        <locator>PGR95-143</locator>
    </citation>
    <scope>NUCLEOTIDE SEQUENCE [MRNA]</scope>
    <source>
        <strain>cv. Lomello</strain>
    </source>
</reference>
<reference key="2">
    <citation type="submission" date="1995-04" db="EMBL/GenBank/DDBJ databases">
        <authorList>
            <person name="Tseng M.J."/>
            <person name="Wang C.S."/>
            <person name="Hsu H.R."/>
        </authorList>
    </citation>
    <scope>NUCLEOTIDE SEQUENCE [MRNA]</scope>
    <source>
        <strain>cv. Tainung 67</strain>
    </source>
</reference>
<reference key="3">
    <citation type="submission" date="1997-08" db="EMBL/GenBank/DDBJ databases">
        <title>Characterization of the rice homolog to the 16kd Maize oleosin.</title>
        <authorList>
            <person name="Medina J."/>
            <person name="Quatrano R.S."/>
        </authorList>
    </citation>
    <scope>NUCLEOTIDE SEQUENCE [MRNA]</scope>
    <source>
        <strain>cv. Nipponbare</strain>
    </source>
</reference>
<reference key="4">
    <citation type="journal article" date="2002" name="Nature">
        <title>Sequence and analysis of rice chromosome 4.</title>
        <authorList>
            <person name="Feng Q."/>
            <person name="Zhang Y."/>
            <person name="Hao P."/>
            <person name="Wang S."/>
            <person name="Fu G."/>
            <person name="Huang Y."/>
            <person name="Li Y."/>
            <person name="Zhu J."/>
            <person name="Liu Y."/>
            <person name="Hu X."/>
            <person name="Jia P."/>
            <person name="Zhang Y."/>
            <person name="Zhao Q."/>
            <person name="Ying K."/>
            <person name="Yu S."/>
            <person name="Tang Y."/>
            <person name="Weng Q."/>
            <person name="Zhang L."/>
            <person name="Lu Y."/>
            <person name="Mu J."/>
            <person name="Lu Y."/>
            <person name="Zhang L.S."/>
            <person name="Yu Z."/>
            <person name="Fan D."/>
            <person name="Liu X."/>
            <person name="Lu T."/>
            <person name="Li C."/>
            <person name="Wu Y."/>
            <person name="Sun T."/>
            <person name="Lei H."/>
            <person name="Li T."/>
            <person name="Hu H."/>
            <person name="Guan J."/>
            <person name="Wu M."/>
            <person name="Zhang R."/>
            <person name="Zhou B."/>
            <person name="Chen Z."/>
            <person name="Chen L."/>
            <person name="Jin Z."/>
            <person name="Wang R."/>
            <person name="Yin H."/>
            <person name="Cai Z."/>
            <person name="Ren S."/>
            <person name="Lv G."/>
            <person name="Gu W."/>
            <person name="Zhu G."/>
            <person name="Tu Y."/>
            <person name="Jia J."/>
            <person name="Zhang Y."/>
            <person name="Chen J."/>
            <person name="Kang H."/>
            <person name="Chen X."/>
            <person name="Shao C."/>
            <person name="Sun Y."/>
            <person name="Hu Q."/>
            <person name="Zhang X."/>
            <person name="Zhang W."/>
            <person name="Wang L."/>
            <person name="Ding C."/>
            <person name="Sheng H."/>
            <person name="Gu J."/>
            <person name="Chen S."/>
            <person name="Ni L."/>
            <person name="Zhu F."/>
            <person name="Chen W."/>
            <person name="Lan L."/>
            <person name="Lai Y."/>
            <person name="Cheng Z."/>
            <person name="Gu M."/>
            <person name="Jiang J."/>
            <person name="Li J."/>
            <person name="Hong G."/>
            <person name="Xue Y."/>
            <person name="Han B."/>
        </authorList>
    </citation>
    <scope>NUCLEOTIDE SEQUENCE [LARGE SCALE GENOMIC DNA]</scope>
    <source>
        <strain>cv. Nipponbare</strain>
    </source>
</reference>
<reference key="5">
    <citation type="journal article" date="2005" name="Nature">
        <title>The map-based sequence of the rice genome.</title>
        <authorList>
            <consortium name="International rice genome sequencing project (IRGSP)"/>
        </authorList>
    </citation>
    <scope>NUCLEOTIDE SEQUENCE [LARGE SCALE GENOMIC DNA]</scope>
    <source>
        <strain>cv. Nipponbare</strain>
    </source>
</reference>
<reference key="6">
    <citation type="journal article" date="2008" name="Nucleic Acids Res.">
        <title>The rice annotation project database (RAP-DB): 2008 update.</title>
        <authorList>
            <consortium name="The rice annotation project (RAP)"/>
        </authorList>
    </citation>
    <scope>GENOME REANNOTATION</scope>
    <source>
        <strain>cv. Nipponbare</strain>
    </source>
</reference>
<reference key="7">
    <citation type="journal article" date="2013" name="Rice">
        <title>Improvement of the Oryza sativa Nipponbare reference genome using next generation sequence and optical map data.</title>
        <authorList>
            <person name="Kawahara Y."/>
            <person name="de la Bastide M."/>
            <person name="Hamilton J.P."/>
            <person name="Kanamori H."/>
            <person name="McCombie W.R."/>
            <person name="Ouyang S."/>
            <person name="Schwartz D.C."/>
            <person name="Tanaka T."/>
            <person name="Wu J."/>
            <person name="Zhou S."/>
            <person name="Childs K.L."/>
            <person name="Davidson R.M."/>
            <person name="Lin H."/>
            <person name="Quesada-Ocampo L."/>
            <person name="Vaillancourt B."/>
            <person name="Sakai H."/>
            <person name="Lee S.S."/>
            <person name="Kim J."/>
            <person name="Numa H."/>
            <person name="Itoh T."/>
            <person name="Buell C.R."/>
            <person name="Matsumoto T."/>
        </authorList>
    </citation>
    <scope>GENOME REANNOTATION</scope>
    <scope>SEQUENCE REVISION TO PRO-27</scope>
    <source>
        <strain>cv. Nipponbare</strain>
    </source>
</reference>
<reference key="8">
    <citation type="journal article" date="2005" name="PLoS Biol.">
        <title>The genomes of Oryza sativa: a history of duplications.</title>
        <authorList>
            <person name="Yu J."/>
            <person name="Wang J."/>
            <person name="Lin W."/>
            <person name="Li S."/>
            <person name="Li H."/>
            <person name="Zhou J."/>
            <person name="Ni P."/>
            <person name="Dong W."/>
            <person name="Hu S."/>
            <person name="Zeng C."/>
            <person name="Zhang J."/>
            <person name="Zhang Y."/>
            <person name="Li R."/>
            <person name="Xu Z."/>
            <person name="Li S."/>
            <person name="Li X."/>
            <person name="Zheng H."/>
            <person name="Cong L."/>
            <person name="Lin L."/>
            <person name="Yin J."/>
            <person name="Geng J."/>
            <person name="Li G."/>
            <person name="Shi J."/>
            <person name="Liu J."/>
            <person name="Lv H."/>
            <person name="Li J."/>
            <person name="Wang J."/>
            <person name="Deng Y."/>
            <person name="Ran L."/>
            <person name="Shi X."/>
            <person name="Wang X."/>
            <person name="Wu Q."/>
            <person name="Li C."/>
            <person name="Ren X."/>
            <person name="Wang J."/>
            <person name="Wang X."/>
            <person name="Li D."/>
            <person name="Liu D."/>
            <person name="Zhang X."/>
            <person name="Ji Z."/>
            <person name="Zhao W."/>
            <person name="Sun Y."/>
            <person name="Zhang Z."/>
            <person name="Bao J."/>
            <person name="Han Y."/>
            <person name="Dong L."/>
            <person name="Ji J."/>
            <person name="Chen P."/>
            <person name="Wu S."/>
            <person name="Liu J."/>
            <person name="Xiao Y."/>
            <person name="Bu D."/>
            <person name="Tan J."/>
            <person name="Yang L."/>
            <person name="Ye C."/>
            <person name="Zhang J."/>
            <person name="Xu J."/>
            <person name="Zhou Y."/>
            <person name="Yu Y."/>
            <person name="Zhang B."/>
            <person name="Zhuang S."/>
            <person name="Wei H."/>
            <person name="Liu B."/>
            <person name="Lei M."/>
            <person name="Yu H."/>
            <person name="Li Y."/>
            <person name="Xu H."/>
            <person name="Wei S."/>
            <person name="He X."/>
            <person name="Fang L."/>
            <person name="Zhang Z."/>
            <person name="Zhang Y."/>
            <person name="Huang X."/>
            <person name="Su Z."/>
            <person name="Tong W."/>
            <person name="Li J."/>
            <person name="Tong Z."/>
            <person name="Li S."/>
            <person name="Ye J."/>
            <person name="Wang L."/>
            <person name="Fang L."/>
            <person name="Lei T."/>
            <person name="Chen C.-S."/>
            <person name="Chen H.-C."/>
            <person name="Xu Z."/>
            <person name="Li H."/>
            <person name="Huang H."/>
            <person name="Zhang F."/>
            <person name="Xu H."/>
            <person name="Li N."/>
            <person name="Zhao C."/>
            <person name="Li S."/>
            <person name="Dong L."/>
            <person name="Huang Y."/>
            <person name="Li L."/>
            <person name="Xi Y."/>
            <person name="Qi Q."/>
            <person name="Li W."/>
            <person name="Zhang B."/>
            <person name="Hu W."/>
            <person name="Zhang Y."/>
            <person name="Tian X."/>
            <person name="Jiao Y."/>
            <person name="Liang X."/>
            <person name="Jin J."/>
            <person name="Gao L."/>
            <person name="Zheng W."/>
            <person name="Hao B."/>
            <person name="Liu S.-M."/>
            <person name="Wang W."/>
            <person name="Yuan L."/>
            <person name="Cao M."/>
            <person name="McDermott J."/>
            <person name="Samudrala R."/>
            <person name="Wang J."/>
            <person name="Wong G.K.-S."/>
            <person name="Yang H."/>
        </authorList>
    </citation>
    <scope>NUCLEOTIDE SEQUENCE [LARGE SCALE GENOMIC DNA]</scope>
    <source>
        <strain>cv. Nipponbare</strain>
    </source>
</reference>
<dbReference type="EMBL" id="U43930">
    <property type="protein sequence ID" value="AAC02239.1"/>
    <property type="molecule type" value="mRNA"/>
</dbReference>
<dbReference type="EMBL" id="U25970">
    <property type="protein sequence ID" value="AAD10371.1"/>
    <property type="status" value="ALT_SEQ"/>
    <property type="molecule type" value="mRNA"/>
</dbReference>
<dbReference type="EMBL" id="L76464">
    <property type="protein sequence ID" value="AAL40177.1"/>
    <property type="molecule type" value="mRNA"/>
</dbReference>
<dbReference type="EMBL" id="AF022148">
    <property type="protein sequence ID" value="AAC33281.1"/>
    <property type="molecule type" value="mRNA"/>
</dbReference>
<dbReference type="EMBL" id="AL607006">
    <property type="protein sequence ID" value="CAE02016.3"/>
    <property type="status" value="ALT_SEQ"/>
    <property type="molecule type" value="Genomic_DNA"/>
</dbReference>
<dbReference type="EMBL" id="AP008210">
    <property type="protein sequence ID" value="BAF15387.1"/>
    <property type="molecule type" value="Genomic_DNA"/>
</dbReference>
<dbReference type="EMBL" id="AP014960">
    <property type="protein sequence ID" value="BAS90341.1"/>
    <property type="molecule type" value="Genomic_DNA"/>
</dbReference>
<dbReference type="EMBL" id="CM000141">
    <property type="protein sequence ID" value="EAZ31530.1"/>
    <property type="molecule type" value="Genomic_DNA"/>
</dbReference>
<dbReference type="PIR" id="T02070">
    <property type="entry name" value="T02070"/>
</dbReference>
<dbReference type="PIR" id="T03378">
    <property type="entry name" value="T03378"/>
</dbReference>
<dbReference type="FunCoup" id="Q42980">
    <property type="interactions" value="1308"/>
</dbReference>
<dbReference type="STRING" id="39947.Q42980"/>
<dbReference type="PaxDb" id="39947-Q42980"/>
<dbReference type="EnsemblPlants" id="Os04t0546500-01">
    <property type="protein sequence ID" value="Os04t0546500-01"/>
    <property type="gene ID" value="Os04g0546500"/>
</dbReference>
<dbReference type="EnsemblPlants" id="Os04t0546500-02">
    <property type="protein sequence ID" value="Os04t0546500-02"/>
    <property type="gene ID" value="Os04g0546500"/>
</dbReference>
<dbReference type="Gramene" id="Os04t0546500-01">
    <property type="protein sequence ID" value="Os04t0546500-01"/>
    <property type="gene ID" value="Os04g0546500"/>
</dbReference>
<dbReference type="Gramene" id="Os04t0546500-02">
    <property type="protein sequence ID" value="Os04t0546500-02"/>
    <property type="gene ID" value="Os04g0546500"/>
</dbReference>
<dbReference type="KEGG" id="dosa:Os04g0546500"/>
<dbReference type="KEGG" id="osa:4336570"/>
<dbReference type="eggNOG" id="ENOG502RZIP">
    <property type="taxonomic scope" value="Eukaryota"/>
</dbReference>
<dbReference type="InParanoid" id="Q42980"/>
<dbReference type="OMA" id="FGQQHIT"/>
<dbReference type="OrthoDB" id="690239at2759"/>
<dbReference type="Proteomes" id="UP000000763">
    <property type="component" value="Chromosome 4"/>
</dbReference>
<dbReference type="Proteomes" id="UP000007752">
    <property type="component" value="Chromosome 4"/>
</dbReference>
<dbReference type="Proteomes" id="UP000059680">
    <property type="component" value="Chromosome 4"/>
</dbReference>
<dbReference type="ExpressionAtlas" id="Q42980">
    <property type="expression patterns" value="baseline and differential"/>
</dbReference>
<dbReference type="GO" id="GO:0016020">
    <property type="term" value="C:membrane"/>
    <property type="evidence" value="ECO:0007669"/>
    <property type="project" value="UniProtKB-SubCell"/>
</dbReference>
<dbReference type="GO" id="GO:0012511">
    <property type="term" value="C:monolayer-surrounded lipid storage body"/>
    <property type="evidence" value="ECO:0007669"/>
    <property type="project" value="InterPro"/>
</dbReference>
<dbReference type="GO" id="GO:0019915">
    <property type="term" value="P:lipid storage"/>
    <property type="evidence" value="ECO:0000318"/>
    <property type="project" value="GO_Central"/>
</dbReference>
<dbReference type="GO" id="GO:0009791">
    <property type="term" value="P:post-embryonic development"/>
    <property type="evidence" value="ECO:0007669"/>
    <property type="project" value="UniProtKB-ARBA"/>
</dbReference>
<dbReference type="GO" id="GO:0048608">
    <property type="term" value="P:reproductive structure development"/>
    <property type="evidence" value="ECO:0007669"/>
    <property type="project" value="UniProtKB-ARBA"/>
</dbReference>
<dbReference type="InterPro" id="IPR000136">
    <property type="entry name" value="Oleosin"/>
</dbReference>
<dbReference type="PANTHER" id="PTHR33203">
    <property type="entry name" value="OLEOSIN"/>
    <property type="match status" value="1"/>
</dbReference>
<dbReference type="PANTHER" id="PTHR33203:SF25">
    <property type="entry name" value="OLEOSIN 18.5 KDA"/>
    <property type="match status" value="1"/>
</dbReference>
<dbReference type="Pfam" id="PF01277">
    <property type="entry name" value="Oleosin"/>
    <property type="match status" value="1"/>
</dbReference>
<dbReference type="PROSITE" id="PS00811">
    <property type="entry name" value="OLEOSINS"/>
    <property type="match status" value="1"/>
</dbReference>
<name>OLEO1_ORYSJ</name>
<proteinExistence type="evidence at transcript level"/>
<sequence length="148" mass="15200">MADQHRGVIGGGGYGDRGGQEQQEKQPFMMTALKTVTAATAGGSMLVLSGLILAGTVIALTVATPVLVIFSPVLVPAAIALALMAAGFVTSGGLGVAALSVFSWMYKYLTGKHPPGADQLDHAKARLASKARDIKEAAQHRIDQAQAS</sequence>
<evidence type="ECO:0000250" key="1"/>
<evidence type="ECO:0000255" key="2"/>
<evidence type="ECO:0000256" key="3">
    <source>
        <dbReference type="SAM" id="MobiDB-lite"/>
    </source>
</evidence>
<evidence type="ECO:0000305" key="4"/>
<evidence type="ECO:0000312" key="5">
    <source>
        <dbReference type="EMBL" id="EAZ31530.1"/>
    </source>
</evidence>
<organism>
    <name type="scientific">Oryza sativa subsp. japonica</name>
    <name type="common">Rice</name>
    <dbReference type="NCBI Taxonomy" id="39947"/>
    <lineage>
        <taxon>Eukaryota</taxon>
        <taxon>Viridiplantae</taxon>
        <taxon>Streptophyta</taxon>
        <taxon>Embryophyta</taxon>
        <taxon>Tracheophyta</taxon>
        <taxon>Spermatophyta</taxon>
        <taxon>Magnoliopsida</taxon>
        <taxon>Liliopsida</taxon>
        <taxon>Poales</taxon>
        <taxon>Poaceae</taxon>
        <taxon>BOP clade</taxon>
        <taxon>Oryzoideae</taxon>
        <taxon>Oryzeae</taxon>
        <taxon>Oryzinae</taxon>
        <taxon>Oryza</taxon>
        <taxon>Oryza sativa</taxon>
    </lineage>
</organism>
<accession>Q42980</accession>
<accession>A3AW41</accession>
<accession>O81104</accession>
<accession>Q0JBA0</accession>
<accession>Q7XSD3</accession>
<accession>Q9ZRH7</accession>